<proteinExistence type="inferred from homology"/>
<comment type="similarity">
    <text evidence="1">Belongs to the MG067/MG068/MG395 family.</text>
</comment>
<reference key="1">
    <citation type="journal article" date="1996" name="Nucleic Acids Res.">
        <title>Complete sequence analysis of the genome of the bacterium Mycoplasma pneumoniae.</title>
        <authorList>
            <person name="Himmelreich R."/>
            <person name="Hilbert H."/>
            <person name="Plagens H."/>
            <person name="Pirkl E."/>
            <person name="Li B.-C."/>
            <person name="Herrmann R."/>
        </authorList>
    </citation>
    <scope>NUCLEOTIDE SEQUENCE [LARGE SCALE GENOMIC DNA]</scope>
    <source>
        <strain>ATCC 29342 / M129 / Subtype 1</strain>
    </source>
</reference>
<accession>P75196</accession>
<organism>
    <name type="scientific">Mycoplasma pneumoniae (strain ATCC 29342 / M129 / Subtype 1)</name>
    <name type="common">Mycoplasmoides pneumoniae</name>
    <dbReference type="NCBI Taxonomy" id="272634"/>
    <lineage>
        <taxon>Bacteria</taxon>
        <taxon>Bacillati</taxon>
        <taxon>Mycoplasmatota</taxon>
        <taxon>Mycoplasmoidales</taxon>
        <taxon>Mycoplasmoidaceae</taxon>
        <taxon>Mycoplasmoides</taxon>
    </lineage>
</organism>
<feature type="chain" id="PRO_0000210733" description="Uncharacterized protein MPN_584">
    <location>
        <begin position="1"/>
        <end position="135"/>
    </location>
</feature>
<gene>
    <name type="ordered locus">MPN_584</name>
    <name type="ORF">D02_orf135L</name>
    <name type="ORF">MP258</name>
</gene>
<protein>
    <recommendedName>
        <fullName>Uncharacterized protein MPN_584</fullName>
    </recommendedName>
</protein>
<sequence length="135" mass="15588">MNYDLSQKFKVYLEFSGKKYRIYGQSIGISHLDLGGGSSGSLLLNDKKQIAGIYFGVDGANNELGLAQLLRWKPETYHNDEARSVAYDLIFGNKNTTKYYAQFVKEHKTHLYEQIKQINNDEFRFVEKTKRHNLG</sequence>
<dbReference type="EMBL" id="U00089">
    <property type="protein sequence ID" value="AAB95906.1"/>
    <property type="molecule type" value="Genomic_DNA"/>
</dbReference>
<dbReference type="PIR" id="S73584">
    <property type="entry name" value="S73584"/>
</dbReference>
<dbReference type="RefSeq" id="NP_110273.1">
    <property type="nucleotide sequence ID" value="NC_000912.1"/>
</dbReference>
<dbReference type="STRING" id="272634.MPN_584"/>
<dbReference type="EnsemblBacteria" id="AAB95906">
    <property type="protein sequence ID" value="AAB95906"/>
    <property type="gene ID" value="MPN_584"/>
</dbReference>
<dbReference type="KEGG" id="mpn:MPN_584"/>
<dbReference type="PATRIC" id="fig|272634.6.peg.647"/>
<dbReference type="HOGENOM" id="CLU_134995_0_0_14"/>
<dbReference type="BioCyc" id="MPNE272634:G1GJ3-953-MONOMER"/>
<dbReference type="Proteomes" id="UP000000808">
    <property type="component" value="Chromosome"/>
</dbReference>
<dbReference type="GO" id="GO:0005524">
    <property type="term" value="F:ATP binding"/>
    <property type="evidence" value="ECO:0007669"/>
    <property type="project" value="InterPro"/>
</dbReference>
<dbReference type="GO" id="GO:0003723">
    <property type="term" value="F:RNA binding"/>
    <property type="evidence" value="ECO:0007669"/>
    <property type="project" value="InterPro"/>
</dbReference>
<dbReference type="GO" id="GO:0003724">
    <property type="term" value="F:RNA helicase activity"/>
    <property type="evidence" value="ECO:0007669"/>
    <property type="project" value="InterPro"/>
</dbReference>
<dbReference type="InterPro" id="IPR001850">
    <property type="entry name" value="Flavi_NS3_S7"/>
</dbReference>
<dbReference type="InterPro" id="IPR022381">
    <property type="entry name" value="Uncharacterised_MG067"/>
</dbReference>
<dbReference type="Pfam" id="PF00949">
    <property type="entry name" value="Peptidase_S7"/>
    <property type="match status" value="1"/>
</dbReference>
<dbReference type="PRINTS" id="PR00840">
    <property type="entry name" value="Y06768FAMILY"/>
</dbReference>
<name>Y584_MYCPN</name>
<evidence type="ECO:0000305" key="1"/>
<keyword id="KW-1185">Reference proteome</keyword>